<gene>
    <name type="primary">invF</name>
    <name type="ordered locus">STM2899</name>
</gene>
<reference key="1">
    <citation type="journal article" date="1994" name="Mol. Microbiol.">
        <title>The Salmonella typhimurium invasion genes invF and invG encode homologues of the AraC and PulD family of proteins.</title>
        <authorList>
            <person name="Kaniga K."/>
            <person name="Bossio J.C."/>
            <person name="Galan J.E."/>
        </authorList>
    </citation>
    <scope>NUCLEOTIDE SEQUENCE [GENOMIC DNA]</scope>
    <source>
        <strain>SR-11</strain>
    </source>
</reference>
<reference key="2">
    <citation type="journal article" date="2001" name="Nature">
        <title>Complete genome sequence of Salmonella enterica serovar Typhimurium LT2.</title>
        <authorList>
            <person name="McClelland M."/>
            <person name="Sanderson K.E."/>
            <person name="Spieth J."/>
            <person name="Clifton S.W."/>
            <person name="Latreille P."/>
            <person name="Courtney L."/>
            <person name="Porwollik S."/>
            <person name="Ali J."/>
            <person name="Dante M."/>
            <person name="Du F."/>
            <person name="Hou S."/>
            <person name="Layman D."/>
            <person name="Leonard S."/>
            <person name="Nguyen C."/>
            <person name="Scott K."/>
            <person name="Holmes A."/>
            <person name="Grewal N."/>
            <person name="Mulvaney E."/>
            <person name="Ryan E."/>
            <person name="Sun H."/>
            <person name="Florea L."/>
            <person name="Miller W."/>
            <person name="Stoneking T."/>
            <person name="Nhan M."/>
            <person name="Waterston R."/>
            <person name="Wilson R.K."/>
        </authorList>
    </citation>
    <scope>NUCLEOTIDE SEQUENCE [LARGE SCALE GENOMIC DNA]</scope>
    <source>
        <strain>LT2 / SGSC1412 / ATCC 700720</strain>
    </source>
</reference>
<reference key="3">
    <citation type="journal article" date="1999" name="Infect. Immun.">
        <title>Differential regulation of Salmonella typhimurium type III secreted proteins by pathogenicity island 1 (SPI-1)-encoded transcriptional activators InvF and hilA.</title>
        <authorList>
            <person name="Eichelberg K."/>
            <person name="Galan J.E."/>
        </authorList>
    </citation>
    <scope>FUNCTION IN REGULATION</scope>
    <source>
        <strain>SL1344</strain>
    </source>
</reference>
<reference key="4">
    <citation type="journal article" date="1999" name="J. Bacteriol.">
        <title>InvF is required for expression of genes encoding proteins secreted by the SPI1 type III secretion apparatus in Salmonella typhimurium.</title>
        <authorList>
            <person name="Darwin K.H."/>
            <person name="Miller V.L."/>
        </authorList>
    </citation>
    <scope>FUNCTION</scope>
    <source>
        <strain>SL1344</strain>
    </source>
</reference>
<reference key="5">
    <citation type="journal article" date="2000" name="Mol. Microbiol.">
        <title>The putative invasion protein chaperone SicA acts together with InvF to activate the expression of Salmonella typhimurium virulence genes.</title>
        <authorList>
            <person name="Darwin K.H."/>
            <person name="Miller V.L."/>
        </authorList>
    </citation>
    <scope>FUNCTION</scope>
    <scope>REGULATION BY HILA</scope>
    <source>
        <strain>ATCC 14028s / SGSG 2262</strain>
        <strain>LT2</strain>
        <strain>SL1344</strain>
    </source>
</reference>
<reference key="6">
    <citation type="journal article" date="2001" name="EMBO J.">
        <title>Type III secretion chaperone-dependent regulation: activation of virulence genes by SicA and InvF in Salmonella typhimurium.</title>
        <authorList>
            <person name="Darwin K.H."/>
            <person name="Miller V.L."/>
        </authorList>
    </citation>
    <scope>FUNCTION</scope>
    <source>
        <strain>SL1344</strain>
    </source>
</reference>
<reference key="7">
    <citation type="journal article" date="2017" name="PLoS Pathog.">
        <title>The transcriptional regulator SsrB is involved in a molecular switch controlling virulence lifestyles of Salmonella.</title>
        <authorList>
            <person name="Perez-Morales D."/>
            <person name="Banda M.M."/>
            <person name="Chau N.Y.E."/>
            <person name="Salgado H."/>
            <person name="Martinez-Flores I."/>
            <person name="Ibarra J.A."/>
            <person name="Ilyas B."/>
            <person name="Coombes B.K."/>
            <person name="Bustamante V.H."/>
        </authorList>
    </citation>
    <scope>INDUCTION</scope>
    <source>
        <strain evidence="7">SL1344</strain>
    </source>
</reference>
<feature type="chain" id="PRO_0000194527" description="Invasion protein InvF">
    <location>
        <begin position="1"/>
        <end position="216"/>
    </location>
</feature>
<feature type="domain" description="HTH araC/xylS-type" evidence="1">
    <location>
        <begin position="112"/>
        <end position="210"/>
    </location>
</feature>
<feature type="DNA-binding region" description="H-T-H motif" evidence="1">
    <location>
        <begin position="129"/>
        <end position="150"/>
    </location>
</feature>
<feature type="DNA-binding region" description="H-T-H motif" evidence="1">
    <location>
        <begin position="177"/>
        <end position="200"/>
    </location>
</feature>
<proteinExistence type="evidence at protein level"/>
<keyword id="KW-0010">Activator</keyword>
<keyword id="KW-0238">DNA-binding</keyword>
<keyword id="KW-1185">Reference proteome</keyword>
<keyword id="KW-0804">Transcription</keyword>
<keyword id="KW-0805">Transcription regulation</keyword>
<keyword id="KW-0843">Virulence</keyword>
<organism>
    <name type="scientific">Salmonella typhimurium (strain LT2 / SGSC1412 / ATCC 700720)</name>
    <dbReference type="NCBI Taxonomy" id="99287"/>
    <lineage>
        <taxon>Bacteria</taxon>
        <taxon>Pseudomonadati</taxon>
        <taxon>Pseudomonadota</taxon>
        <taxon>Gammaproteobacteria</taxon>
        <taxon>Enterobacterales</taxon>
        <taxon>Enterobacteriaceae</taxon>
        <taxon>Salmonella</taxon>
    </lineage>
</organism>
<sequence length="216" mass="24389">MSFSESRHNENCLIQEGALLFCEQAVVAPVSGDLVFRPLKIEVLSKLLAFIDGAGLVDTTYAESDKWVLLSPEFRAIWQDRKRCEYWFLQQIITPSPAFNKVLALLRKSESYWLVGYLLAQSTSGNTMRMLGEDYGVSYTHFRRLCSRALGGKAKSELRNWRMAQSLLNSVEGHENITQLAVNHGYSSPSHFSSEIKELIGVSPRKLSNIIQLADK</sequence>
<protein>
    <recommendedName>
        <fullName>Invasion protein InvF</fullName>
    </recommendedName>
    <alternativeName>
        <fullName>Transcriptional regulator InvF</fullName>
    </alternativeName>
</protein>
<name>INVF_SALTY</name>
<accession>P69343</accession>
<accession>P39437</accession>
<dbReference type="EMBL" id="U08280">
    <property type="protein sequence ID" value="AAA74039.1"/>
    <property type="molecule type" value="Genomic_DNA"/>
</dbReference>
<dbReference type="EMBL" id="AE006468">
    <property type="protein sequence ID" value="AAL21779.1"/>
    <property type="molecule type" value="Genomic_DNA"/>
</dbReference>
<dbReference type="PIR" id="S54419">
    <property type="entry name" value="S54419"/>
</dbReference>
<dbReference type="RefSeq" id="NP_461820.1">
    <property type="nucleotide sequence ID" value="NC_003197.2"/>
</dbReference>
<dbReference type="RefSeq" id="WP_001674874.1">
    <property type="nucleotide sequence ID" value="NC_003197.2"/>
</dbReference>
<dbReference type="SMR" id="P69343"/>
<dbReference type="STRING" id="99287.STM2899"/>
<dbReference type="PaxDb" id="99287-STM2899"/>
<dbReference type="GeneID" id="1254422"/>
<dbReference type="KEGG" id="stm:STM2899"/>
<dbReference type="PATRIC" id="fig|99287.12.peg.3055"/>
<dbReference type="HOGENOM" id="CLU_082966_1_0_6"/>
<dbReference type="BioCyc" id="SENT99287:STM2899-MONOMER"/>
<dbReference type="Proteomes" id="UP000001014">
    <property type="component" value="Chromosome"/>
</dbReference>
<dbReference type="GO" id="GO:0003700">
    <property type="term" value="F:DNA-binding transcription factor activity"/>
    <property type="evidence" value="ECO:0007669"/>
    <property type="project" value="InterPro"/>
</dbReference>
<dbReference type="GO" id="GO:0043565">
    <property type="term" value="F:sequence-specific DNA binding"/>
    <property type="evidence" value="ECO:0007669"/>
    <property type="project" value="InterPro"/>
</dbReference>
<dbReference type="Gene3D" id="1.10.10.60">
    <property type="entry name" value="Homeodomain-like"/>
    <property type="match status" value="1"/>
</dbReference>
<dbReference type="InterPro" id="IPR009057">
    <property type="entry name" value="Homeodomain-like_sf"/>
</dbReference>
<dbReference type="InterPro" id="IPR018060">
    <property type="entry name" value="HTH_AraC"/>
</dbReference>
<dbReference type="InterPro" id="IPR018062">
    <property type="entry name" value="HTH_AraC-typ_CS"/>
</dbReference>
<dbReference type="NCBIfam" id="NF011868">
    <property type="entry name" value="PRK15340.1"/>
    <property type="match status" value="1"/>
</dbReference>
<dbReference type="Pfam" id="PF12833">
    <property type="entry name" value="HTH_18"/>
    <property type="match status" value="1"/>
</dbReference>
<dbReference type="SMART" id="SM00342">
    <property type="entry name" value="HTH_ARAC"/>
    <property type="match status" value="1"/>
</dbReference>
<dbReference type="SUPFAM" id="SSF46689">
    <property type="entry name" value="Homeodomain-like"/>
    <property type="match status" value="1"/>
</dbReference>
<dbReference type="PROSITE" id="PS00041">
    <property type="entry name" value="HTH_ARAC_FAMILY_1"/>
    <property type="match status" value="1"/>
</dbReference>
<dbReference type="PROSITE" id="PS01124">
    <property type="entry name" value="HTH_ARAC_FAMILY_2"/>
    <property type="match status" value="1"/>
</dbReference>
<comment type="function">
    <text evidence="2 3 4 5">Transcriptional regulator required for the expression of several genes encoding type III secretion system SPI1 effector proteins. The interaction with SicA is necessary for the activation of sigDE (sopB pipC), sicAsipBCDA, and sopE.</text>
</comment>
<comment type="induction">
    <text evidence="4 6">Transcriptionally activated by HilA (PubMed:10692170). Repressed following invasion of host macrophages (PubMed:28704543).</text>
</comment>
<evidence type="ECO:0000255" key="1">
    <source>
        <dbReference type="PROSITE-ProRule" id="PRU00593"/>
    </source>
</evidence>
<evidence type="ECO:0000269" key="2">
    <source>
    </source>
</evidence>
<evidence type="ECO:0000269" key="3">
    <source>
    </source>
</evidence>
<evidence type="ECO:0000269" key="4">
    <source>
    </source>
</evidence>
<evidence type="ECO:0000269" key="5">
    <source>
    </source>
</evidence>
<evidence type="ECO:0000269" key="6">
    <source>
    </source>
</evidence>
<evidence type="ECO:0000303" key="7">
    <source>
    </source>
</evidence>